<accession>B6HV38</accession>
<proteinExistence type="evidence at protein level"/>
<sequence length="497" mass="55830">MGLFSSTQPPQPTTVPSDEIIPLHFWNTALCMRGTVLDVSLKFDDVLDVSKLRDALNRLLEMEDWRQLGARLRMNVDGKLEYHIPAHFDASRPAFSMTNAQHETSIADHPLGARIPHTTGTPAIFPSPDELSPLLRSADAPKHIDDWTYSDRPQLCIHVITFSDATVITITWLHTLADVMGMTTILNAWTALLQGNREAIPKLQGFRSDPLTQLGQRTPAEKYMHFNRVFGRKEFLWFIGLNIFDRLWYRQEERRTICIPATCLRSLRQQASSEISATSSSEGGTVPFVSESDVLLGWWVRSLYGALGLRTDQTILVNNALNLRTSLHESFMSKDSAYMGNALCMSPTFLQGQQIADEPLGQIALRIRESVAEQRTPEQVEAMTALQMQTMEKTGYLALVGDPRMMLLSCSNWHKARLFDMDFSPAVLQSSAQSSSQNTQKKGKPSYVNGVQHSENSFRNVLSVIGKDAGRNWWLTGVLRTDAWAHVEEQVHKLGSS</sequence>
<reference key="1">
    <citation type="journal article" date="2008" name="Nat. Biotechnol.">
        <title>Genome sequencing and analysis of the filamentous fungus Penicillium chrysogenum.</title>
        <authorList>
            <person name="van den Berg M.A."/>
            <person name="Albang R."/>
            <person name="Albermann K."/>
            <person name="Badger J.H."/>
            <person name="Daran J.-M."/>
            <person name="Driessen A.J.M."/>
            <person name="Garcia-Estrada C."/>
            <person name="Fedorova N.D."/>
            <person name="Harris D.M."/>
            <person name="Heijne W.H.M."/>
            <person name="Joardar V.S."/>
            <person name="Kiel J.A.K.W."/>
            <person name="Kovalchuk A."/>
            <person name="Martin J.F."/>
            <person name="Nierman W.C."/>
            <person name="Nijland J.G."/>
            <person name="Pronk J.T."/>
            <person name="Roubos J.A."/>
            <person name="van der Klei I.J."/>
            <person name="van Peij N.N.M.E."/>
            <person name="Veenhuis M."/>
            <person name="von Doehren H."/>
            <person name="Wagner C."/>
            <person name="Wortman J.R."/>
            <person name="Bovenberg R.A.L."/>
        </authorList>
    </citation>
    <scope>NUCLEOTIDE SEQUENCE [LARGE SCALE GENOMIC DNA]</scope>
    <source>
        <strain>ATCC 28089 / DSM 1075 / NRRL 1951 / Wisconsin 54-1255</strain>
    </source>
</reference>
<reference key="2">
    <citation type="journal article" date="2013" name="Tetrahedron">
        <title>Reconstituted biosynthesis of fungal meroterpenoid andrastin A.</title>
        <authorList>
            <person name="Matsuda Y."/>
            <person name="Awakawa T."/>
            <person name="Abe I."/>
        </authorList>
    </citation>
    <scope>IDENTIFICATION</scope>
    <scope>FUNCTION</scope>
    <scope>CATALYTIC ACTIVITY</scope>
    <scope>PATHWAY</scope>
</reference>
<gene>
    <name evidence="4" type="primary">adrJ</name>
    <name type="ORF">Pc22g22910</name>
</gene>
<name>ADRJ_PENRW</name>
<protein>
    <recommendedName>
        <fullName evidence="4">Acetyltransferase adrJ</fullName>
        <ecNumber evidence="3">2.3.1.-</ecNumber>
    </recommendedName>
    <alternativeName>
        <fullName evidence="4">Andrastin A biosynthesis cluster protein J</fullName>
    </alternativeName>
</protein>
<organism>
    <name type="scientific">Penicillium rubens (strain ATCC 28089 / DSM 1075 / NRRL 1951 / Wisconsin 54-1255)</name>
    <name type="common">Penicillium chrysogenum</name>
    <dbReference type="NCBI Taxonomy" id="500485"/>
    <lineage>
        <taxon>Eukaryota</taxon>
        <taxon>Fungi</taxon>
        <taxon>Dikarya</taxon>
        <taxon>Ascomycota</taxon>
        <taxon>Pezizomycotina</taxon>
        <taxon>Eurotiomycetes</taxon>
        <taxon>Eurotiomycetidae</taxon>
        <taxon>Eurotiales</taxon>
        <taxon>Aspergillaceae</taxon>
        <taxon>Penicillium</taxon>
        <taxon>Penicillium chrysogenum species complex</taxon>
    </lineage>
</organism>
<feature type="chain" id="PRO_0000446496" description="Acetyltransferase adrJ">
    <location>
        <begin position="1"/>
        <end position="497"/>
    </location>
</feature>
<feature type="region of interest" description="Disordered" evidence="2">
    <location>
        <begin position="430"/>
        <end position="451"/>
    </location>
</feature>
<feature type="active site" description="Proton acceptor" evidence="1">
    <location>
        <position position="174"/>
    </location>
</feature>
<feature type="active site" description="Proton acceptor" evidence="1">
    <location>
        <position position="422"/>
    </location>
</feature>
<keyword id="KW-0012">Acyltransferase</keyword>
<keyword id="KW-1185">Reference proteome</keyword>
<keyword id="KW-0808">Transferase</keyword>
<comment type="function">
    <text evidence="3">Acetyltransferase; part of the gene cluster that mediates the biosynthesis of andrastins, meroterpenoid compounds that exhibit inhibitory activity against ras farnesyltransferase, suggesting that they could be promising leads for antitumor agents (Ref.2). The first step of the pathway is the synthesis of 3,5-dimethylorsellinic acid (DMOA) by the polyketide synthase adrD via condensation of one acetyl-CoA starter unit with 3 malonyl-CoA units and 2 methylations (Ref.2). DMAO is then converted to farnesyl-DMAO by the prenyltransferase adrG (Ref.2). The methyltransferase adrK catalyzes the methylation of the carboxyl group of farnesyl-DMAO to farnesyl-DMAO methyl ester which is further converted to epoxyfarnesyl-DMAO methyl ester by the FAD-dependent monooxygenase adrH (Ref.2). The terpene cyclase adrI then catalyzes the carbon skeletal rearrangement to generate the andrastin E, the first compound in the pathway having the andrastin scaffold, with the tetracyclic ring system (Ref.2). The post-cyclization tailoring enzymes adrF, adrE, adrJ, and adrA, are involved in the conversion of andrastin E into andrastin A. The short chain dehydrogenase adrF is responsible for the oxidation of the C-3 a hydroxyl group of andrastin E to yield the corresponding ketone, andrastin D. The ketoreductase adrE stereoselectively reduces the carbonyl moiety to reverse the stereochemistry of the C-3 position to yield andrastin F. The acetyltransferase adrJ is the acetyltransferase that attaches the acetyl group to the C-3 hydroxyl group of andrastin F to yield andrastin C. Finally, the cytochrome P450 monooxygenase adrA catalyzes two sequential oxidation reactions of the C-23 methyl group, to generate the corresponding alcohol andrastin B, and aldehyde andrastin A (Ref.2).</text>
</comment>
<comment type="pathway">
    <text evidence="3">Secondary metabolite biosynthesis; terpenoid biosynthesis.</text>
</comment>
<comment type="subunit">
    <text evidence="1">Monomer.</text>
</comment>
<comment type="similarity">
    <text evidence="5">Belongs to the plant acyltransferase family.</text>
</comment>
<dbReference type="EC" id="2.3.1.-" evidence="3"/>
<dbReference type="EMBL" id="AM920437">
    <property type="protein sequence ID" value="CAP99579.1"/>
    <property type="molecule type" value="Genomic_DNA"/>
</dbReference>
<dbReference type="RefSeq" id="XP_002566185.1">
    <property type="nucleotide sequence ID" value="XM_002566139.1"/>
</dbReference>
<dbReference type="SMR" id="B6HV38"/>
<dbReference type="VEuPathDB" id="FungiDB:PCH_Pc22g22910"/>
<dbReference type="eggNOG" id="ENOG502S6KB">
    <property type="taxonomic scope" value="Eukaryota"/>
</dbReference>
<dbReference type="HOGENOM" id="CLU_029797_2_1_1"/>
<dbReference type="OMA" id="YCCRSIL"/>
<dbReference type="OrthoDB" id="21502at2759"/>
<dbReference type="BioCyc" id="PCHR:PC22G22910-MONOMER"/>
<dbReference type="UniPathway" id="UPA00213"/>
<dbReference type="Proteomes" id="UP000000724">
    <property type="component" value="Contig Pc00c22"/>
</dbReference>
<dbReference type="GO" id="GO:0016746">
    <property type="term" value="F:acyltransferase activity"/>
    <property type="evidence" value="ECO:0007669"/>
    <property type="project" value="UniProtKB-KW"/>
</dbReference>
<dbReference type="GO" id="GO:0016114">
    <property type="term" value="P:terpenoid biosynthetic process"/>
    <property type="evidence" value="ECO:0007669"/>
    <property type="project" value="UniProtKB-UniPathway"/>
</dbReference>
<dbReference type="Gene3D" id="3.30.559.10">
    <property type="entry name" value="Chloramphenicol acetyltransferase-like domain"/>
    <property type="match status" value="2"/>
</dbReference>
<dbReference type="InterPro" id="IPR023213">
    <property type="entry name" value="CAT-like_dom_sf"/>
</dbReference>
<dbReference type="InterPro" id="IPR051283">
    <property type="entry name" value="Sec_Metabolite_Acyltrans"/>
</dbReference>
<dbReference type="PANTHER" id="PTHR31896">
    <property type="entry name" value="FAMILY REGULATORY PROTEIN, PUTATIVE (AFU_ORTHOLOGUE AFUA_3G14730)-RELATED"/>
    <property type="match status" value="1"/>
</dbReference>
<dbReference type="PANTHER" id="PTHR31896:SF69">
    <property type="entry name" value="FAMILY REGULATORY PROTEIN, PUTATIVE (AFU_ORTHOLOGUE AFUA_3G14730)-RELATED"/>
    <property type="match status" value="1"/>
</dbReference>
<dbReference type="Pfam" id="PF02458">
    <property type="entry name" value="Transferase"/>
    <property type="match status" value="1"/>
</dbReference>
<evidence type="ECO:0000250" key="1">
    <source>
        <dbReference type="UniProtKB" id="Q70PR7"/>
    </source>
</evidence>
<evidence type="ECO:0000256" key="2">
    <source>
        <dbReference type="SAM" id="MobiDB-lite"/>
    </source>
</evidence>
<evidence type="ECO:0000269" key="3">
    <source ref="2"/>
</evidence>
<evidence type="ECO:0000303" key="4">
    <source ref="2"/>
</evidence>
<evidence type="ECO:0000305" key="5"/>